<comment type="function">
    <text evidence="1">Catalyzes the reversible reaction in which hydroxymethyl group from 5,10-methylenetetrahydrofolate is transferred onto alpha-ketoisovalerate to form ketopantoate.</text>
</comment>
<comment type="catalytic activity">
    <reaction evidence="1">
        <text>3-methyl-2-oxobutanoate + (6R)-5,10-methylene-5,6,7,8-tetrahydrofolate + H2O = 2-dehydropantoate + (6S)-5,6,7,8-tetrahydrofolate</text>
        <dbReference type="Rhea" id="RHEA:11824"/>
        <dbReference type="ChEBI" id="CHEBI:11561"/>
        <dbReference type="ChEBI" id="CHEBI:11851"/>
        <dbReference type="ChEBI" id="CHEBI:15377"/>
        <dbReference type="ChEBI" id="CHEBI:15636"/>
        <dbReference type="ChEBI" id="CHEBI:57453"/>
        <dbReference type="EC" id="2.1.2.11"/>
    </reaction>
</comment>
<comment type="cofactor">
    <cofactor evidence="1">
        <name>Mg(2+)</name>
        <dbReference type="ChEBI" id="CHEBI:18420"/>
    </cofactor>
    <text evidence="1">Binds 1 Mg(2+) ion per subunit.</text>
</comment>
<comment type="pathway">
    <text evidence="1">Cofactor biosynthesis; (R)-pantothenate biosynthesis; (R)-pantoate from 3-methyl-2-oxobutanoate: step 1/2.</text>
</comment>
<comment type="subunit">
    <text evidence="1">Homodecamer; pentamer of dimers.</text>
</comment>
<comment type="subcellular location">
    <subcellularLocation>
        <location evidence="1">Cytoplasm</location>
    </subcellularLocation>
</comment>
<comment type="similarity">
    <text evidence="1">Belongs to the PanB family.</text>
</comment>
<reference key="1">
    <citation type="journal article" date="2001" name="Nature">
        <title>Genome sequence of enterohaemorrhagic Escherichia coli O157:H7.</title>
        <authorList>
            <person name="Perna N.T."/>
            <person name="Plunkett G. III"/>
            <person name="Burland V."/>
            <person name="Mau B."/>
            <person name="Glasner J.D."/>
            <person name="Rose D.J."/>
            <person name="Mayhew G.F."/>
            <person name="Evans P.S."/>
            <person name="Gregor J."/>
            <person name="Kirkpatrick H.A."/>
            <person name="Posfai G."/>
            <person name="Hackett J."/>
            <person name="Klink S."/>
            <person name="Boutin A."/>
            <person name="Shao Y."/>
            <person name="Miller L."/>
            <person name="Grotbeck E.J."/>
            <person name="Davis N.W."/>
            <person name="Lim A."/>
            <person name="Dimalanta E.T."/>
            <person name="Potamousis K."/>
            <person name="Apodaca J."/>
            <person name="Anantharaman T.S."/>
            <person name="Lin J."/>
            <person name="Yen G."/>
            <person name="Schwartz D.C."/>
            <person name="Welch R.A."/>
            <person name="Blattner F.R."/>
        </authorList>
    </citation>
    <scope>NUCLEOTIDE SEQUENCE [LARGE SCALE GENOMIC DNA]</scope>
    <source>
        <strain>O157:H7 / EDL933 / ATCC 700927 / EHEC</strain>
    </source>
</reference>
<reference key="2">
    <citation type="journal article" date="2001" name="DNA Res.">
        <title>Complete genome sequence of enterohemorrhagic Escherichia coli O157:H7 and genomic comparison with a laboratory strain K-12.</title>
        <authorList>
            <person name="Hayashi T."/>
            <person name="Makino K."/>
            <person name="Ohnishi M."/>
            <person name="Kurokawa K."/>
            <person name="Ishii K."/>
            <person name="Yokoyama K."/>
            <person name="Han C.-G."/>
            <person name="Ohtsubo E."/>
            <person name="Nakayama K."/>
            <person name="Murata T."/>
            <person name="Tanaka M."/>
            <person name="Tobe T."/>
            <person name="Iida T."/>
            <person name="Takami H."/>
            <person name="Honda T."/>
            <person name="Sasakawa C."/>
            <person name="Ogasawara N."/>
            <person name="Yasunaga T."/>
            <person name="Kuhara S."/>
            <person name="Shiba T."/>
            <person name="Hattori M."/>
            <person name="Shinagawa H."/>
        </authorList>
    </citation>
    <scope>NUCLEOTIDE SEQUENCE [LARGE SCALE GENOMIC DNA]</scope>
    <source>
        <strain>O157:H7 / Sakai / RIMD 0509952 / EHEC</strain>
    </source>
</reference>
<proteinExistence type="inferred from homology"/>
<gene>
    <name evidence="1" type="primary">panB</name>
    <name type="ordered locus">Z0145</name>
    <name type="ordered locus">ECs0138</name>
</gene>
<organism>
    <name type="scientific">Escherichia coli O157:H7</name>
    <dbReference type="NCBI Taxonomy" id="83334"/>
    <lineage>
        <taxon>Bacteria</taxon>
        <taxon>Pseudomonadati</taxon>
        <taxon>Pseudomonadota</taxon>
        <taxon>Gammaproteobacteria</taxon>
        <taxon>Enterobacterales</taxon>
        <taxon>Enterobacteriaceae</taxon>
        <taxon>Escherichia</taxon>
    </lineage>
</organism>
<name>PANB_ECO57</name>
<evidence type="ECO:0000255" key="1">
    <source>
        <dbReference type="HAMAP-Rule" id="MF_00156"/>
    </source>
</evidence>
<keyword id="KW-0963">Cytoplasm</keyword>
<keyword id="KW-0460">Magnesium</keyword>
<keyword id="KW-0479">Metal-binding</keyword>
<keyword id="KW-0566">Pantothenate biosynthesis</keyword>
<keyword id="KW-1185">Reference proteome</keyword>
<keyword id="KW-0808">Transferase</keyword>
<feature type="chain" id="PRO_0000184843" description="3-methyl-2-oxobutanoate hydroxymethyltransferase">
    <location>
        <begin position="1"/>
        <end position="264"/>
    </location>
</feature>
<feature type="active site" description="Proton acceptor" evidence="1">
    <location>
        <position position="181"/>
    </location>
</feature>
<feature type="binding site" evidence="1">
    <location>
        <begin position="45"/>
        <end position="46"/>
    </location>
    <ligand>
        <name>3-methyl-2-oxobutanoate</name>
        <dbReference type="ChEBI" id="CHEBI:11851"/>
    </ligand>
</feature>
<feature type="binding site" evidence="1">
    <location>
        <position position="45"/>
    </location>
    <ligand>
        <name>Mg(2+)</name>
        <dbReference type="ChEBI" id="CHEBI:18420"/>
    </ligand>
</feature>
<feature type="binding site" evidence="1">
    <location>
        <position position="84"/>
    </location>
    <ligand>
        <name>3-methyl-2-oxobutanoate</name>
        <dbReference type="ChEBI" id="CHEBI:11851"/>
    </ligand>
</feature>
<feature type="binding site" evidence="1">
    <location>
        <position position="84"/>
    </location>
    <ligand>
        <name>Mg(2+)</name>
        <dbReference type="ChEBI" id="CHEBI:18420"/>
    </ligand>
</feature>
<feature type="binding site" evidence="1">
    <location>
        <position position="112"/>
    </location>
    <ligand>
        <name>3-methyl-2-oxobutanoate</name>
        <dbReference type="ChEBI" id="CHEBI:11851"/>
    </ligand>
</feature>
<feature type="binding site" evidence="1">
    <location>
        <position position="114"/>
    </location>
    <ligand>
        <name>Mg(2+)</name>
        <dbReference type="ChEBI" id="CHEBI:18420"/>
    </ligand>
</feature>
<dbReference type="EC" id="2.1.2.11" evidence="1"/>
<dbReference type="EMBL" id="AE005174">
    <property type="protein sequence ID" value="AAG54438.1"/>
    <property type="molecule type" value="Genomic_DNA"/>
</dbReference>
<dbReference type="EMBL" id="BA000007">
    <property type="protein sequence ID" value="BAB33561.1"/>
    <property type="molecule type" value="Genomic_DNA"/>
</dbReference>
<dbReference type="PIR" id="B85497">
    <property type="entry name" value="B85497"/>
</dbReference>
<dbReference type="PIR" id="B90646">
    <property type="entry name" value="B90646"/>
</dbReference>
<dbReference type="RefSeq" id="NP_308165.1">
    <property type="nucleotide sequence ID" value="NC_002695.1"/>
</dbReference>
<dbReference type="RefSeq" id="WP_000805473.1">
    <property type="nucleotide sequence ID" value="NZ_VOAI01000002.1"/>
</dbReference>
<dbReference type="SMR" id="Q8X929"/>
<dbReference type="STRING" id="155864.Z0145"/>
<dbReference type="GeneID" id="913736"/>
<dbReference type="KEGG" id="ece:Z0145"/>
<dbReference type="KEGG" id="ecs:ECs_0138"/>
<dbReference type="PATRIC" id="fig|386585.9.peg.238"/>
<dbReference type="eggNOG" id="COG0413">
    <property type="taxonomic scope" value="Bacteria"/>
</dbReference>
<dbReference type="HOGENOM" id="CLU_036645_1_0_6"/>
<dbReference type="OMA" id="VLVWTDM"/>
<dbReference type="UniPathway" id="UPA00028">
    <property type="reaction ID" value="UER00003"/>
</dbReference>
<dbReference type="Proteomes" id="UP000000558">
    <property type="component" value="Chromosome"/>
</dbReference>
<dbReference type="Proteomes" id="UP000002519">
    <property type="component" value="Chromosome"/>
</dbReference>
<dbReference type="GO" id="GO:0005737">
    <property type="term" value="C:cytoplasm"/>
    <property type="evidence" value="ECO:0007669"/>
    <property type="project" value="UniProtKB-SubCell"/>
</dbReference>
<dbReference type="GO" id="GO:0003864">
    <property type="term" value="F:3-methyl-2-oxobutanoate hydroxymethyltransferase activity"/>
    <property type="evidence" value="ECO:0007669"/>
    <property type="project" value="UniProtKB-UniRule"/>
</dbReference>
<dbReference type="GO" id="GO:0000287">
    <property type="term" value="F:magnesium ion binding"/>
    <property type="evidence" value="ECO:0007669"/>
    <property type="project" value="TreeGrafter"/>
</dbReference>
<dbReference type="GO" id="GO:0015940">
    <property type="term" value="P:pantothenate biosynthetic process"/>
    <property type="evidence" value="ECO:0007669"/>
    <property type="project" value="UniProtKB-UniRule"/>
</dbReference>
<dbReference type="CDD" id="cd06557">
    <property type="entry name" value="KPHMT-like"/>
    <property type="match status" value="1"/>
</dbReference>
<dbReference type="FunFam" id="3.20.20.60:FF:000003">
    <property type="entry name" value="3-methyl-2-oxobutanoate hydroxymethyltransferase"/>
    <property type="match status" value="1"/>
</dbReference>
<dbReference type="Gene3D" id="3.20.20.60">
    <property type="entry name" value="Phosphoenolpyruvate-binding domains"/>
    <property type="match status" value="1"/>
</dbReference>
<dbReference type="HAMAP" id="MF_00156">
    <property type="entry name" value="PanB"/>
    <property type="match status" value="1"/>
</dbReference>
<dbReference type="InterPro" id="IPR003700">
    <property type="entry name" value="Pantoate_hydroxy_MeTrfase"/>
</dbReference>
<dbReference type="InterPro" id="IPR015813">
    <property type="entry name" value="Pyrv/PenolPyrv_kinase-like_dom"/>
</dbReference>
<dbReference type="InterPro" id="IPR040442">
    <property type="entry name" value="Pyrv_kinase-like_dom_sf"/>
</dbReference>
<dbReference type="NCBIfam" id="TIGR00222">
    <property type="entry name" value="panB"/>
    <property type="match status" value="1"/>
</dbReference>
<dbReference type="NCBIfam" id="NF001452">
    <property type="entry name" value="PRK00311.1"/>
    <property type="match status" value="1"/>
</dbReference>
<dbReference type="PANTHER" id="PTHR20881">
    <property type="entry name" value="3-METHYL-2-OXOBUTANOATE HYDROXYMETHYLTRANSFERASE"/>
    <property type="match status" value="1"/>
</dbReference>
<dbReference type="PANTHER" id="PTHR20881:SF0">
    <property type="entry name" value="3-METHYL-2-OXOBUTANOATE HYDROXYMETHYLTRANSFERASE"/>
    <property type="match status" value="1"/>
</dbReference>
<dbReference type="Pfam" id="PF02548">
    <property type="entry name" value="Pantoate_transf"/>
    <property type="match status" value="1"/>
</dbReference>
<dbReference type="PIRSF" id="PIRSF000388">
    <property type="entry name" value="Pantoate_hydroxy_MeTrfase"/>
    <property type="match status" value="1"/>
</dbReference>
<dbReference type="SUPFAM" id="SSF51621">
    <property type="entry name" value="Phosphoenolpyruvate/pyruvate domain"/>
    <property type="match status" value="1"/>
</dbReference>
<sequence length="264" mass="28310">MKPTTIASLQKCKQEKKRFATITAYDYSFAKLFAEEGLNVMLVGDSLGMTVQGHESTLPVTVEDIAYHTTAVRRGAPNCLLLADLPFMAYATPEQAFENAATVMRAGANMVKIEGGEWLVETVKMLTERAVPVCGHLGLTPQSVNIFGGYKVQGRGDEASDRLLSDALALEAAGAQLLVLECVPVELAKRITEALAIPVIGIGAGNVTDGQILVMHDAFGITGGHIPKFAKNFLAETGDIRAAVRQYMAEVESGVYPGEEHSFH</sequence>
<protein>
    <recommendedName>
        <fullName evidence="1">3-methyl-2-oxobutanoate hydroxymethyltransferase</fullName>
        <ecNumber evidence="1">2.1.2.11</ecNumber>
    </recommendedName>
    <alternativeName>
        <fullName evidence="1">Ketopantoate hydroxymethyltransferase</fullName>
        <shortName evidence="1">KPHMT</shortName>
    </alternativeName>
</protein>
<accession>Q8X929</accession>